<evidence type="ECO:0000250" key="1">
    <source>
        <dbReference type="UniProtKB" id="Q15596"/>
    </source>
</evidence>
<evidence type="ECO:0000250" key="2">
    <source>
        <dbReference type="UniProtKB" id="Q61026"/>
    </source>
</evidence>
<evidence type="ECO:0000255" key="3"/>
<evidence type="ECO:0000255" key="4">
    <source>
        <dbReference type="PROSITE-ProRule" id="PRU00140"/>
    </source>
</evidence>
<evidence type="ECO:0000255" key="5">
    <source>
        <dbReference type="PROSITE-ProRule" id="PRU00981"/>
    </source>
</evidence>
<evidence type="ECO:0000256" key="6">
    <source>
        <dbReference type="SAM" id="MobiDB-lite"/>
    </source>
</evidence>
<evidence type="ECO:0000269" key="7">
    <source>
    </source>
</evidence>
<evidence type="ECO:0000269" key="8">
    <source>
    </source>
</evidence>
<evidence type="ECO:0000269" key="9">
    <source>
    </source>
</evidence>
<evidence type="ECO:0000269" key="10">
    <source>
    </source>
</evidence>
<evidence type="ECO:0000269" key="11">
    <source>
    </source>
</evidence>
<evidence type="ECO:0000303" key="12">
    <source>
    </source>
</evidence>
<evidence type="ECO:0000303" key="13">
    <source>
    </source>
</evidence>
<evidence type="ECO:0000303" key="14">
    <source>
    </source>
</evidence>
<evidence type="ECO:0000305" key="15"/>
<evidence type="ECO:0000312" key="16">
    <source>
        <dbReference type="EMBL" id="AAI63724.1"/>
    </source>
</evidence>
<evidence type="ECO:0000312" key="17">
    <source>
        <dbReference type="EMBL" id="AAK11608.1"/>
    </source>
</evidence>
<evidence type="ECO:0000312" key="18">
    <source>
        <dbReference type="ZFIN" id="ZDB-GENE-010406-3"/>
    </source>
</evidence>
<comment type="function">
    <text evidence="1 2 10">Transcriptional coactivator for steroid receptors and nuclear receptors. Coactivator of the steroid binding domain (AF-2) but not of the modulating N-terminal domain (AF-1) (By similarity). Has a role in primitive myelopoiesis in the differentiation of granulocytes and macrophages. May play a role in the positive regulation of the circadian clock (By similarity).</text>
</comment>
<comment type="subunit">
    <text evidence="7 9">Interacts with the thyroid hormone receptors thraa and thrb (via the ligand-binding domain).</text>
</comment>
<comment type="subcellular location">
    <subcellularLocation>
        <location evidence="1">Nucleus</location>
    </subcellularLocation>
</comment>
<comment type="alternative products">
    <event type="alternative splicing"/>
    <isoform>
        <id>Q98TW1-1</id>
        <name evidence="9">E20a</name>
        <sequence type="displayed"/>
    </isoform>
    <isoform>
        <id>Q98TW1-2</id>
        <name evidence="9">E20b</name>
        <sequence type="described" ref="VSP_052992"/>
    </isoform>
</comment>
<comment type="tissue specificity">
    <text evidence="8 9 10">Expressed ubiquitously in the embryo and in many adult tissues including the brain, gills, liver, swim bladder and skin. Shows highest expression in the ovary and testis, and lower expression in the intestine, eye and skin. Only isoform E20b is expressed in the muscle and heart.</text>
</comment>
<comment type="domain">
    <text evidence="1">Contains 3 Leu-Xaa-Xaa-Leu-Leu (LXXLL) motifs. The LXXLL motifs are essential for the association with nuclear receptors and are, at least in part, functionally redundant (By similarity).</text>
</comment>
<comment type="domain">
    <text evidence="1">The LLXXLXXXL motif is involved in transcriptional coactivation and CREBBP/CBP binding.</text>
</comment>
<comment type="domain">
    <text evidence="1">Contains 2 C-terminal transcription activation domains (AD1 and AD2) that can function independently.</text>
</comment>
<comment type="similarity">
    <text evidence="3">Belongs to the SRC/p160 nuclear receptor coactivator family.</text>
</comment>
<accession>Q98TW1</accession>
<accession>B3DK53</accession>
<feature type="chain" id="PRO_0000356221" description="Nuclear receptor coactivator 2">
    <location>
        <begin position="1"/>
        <end position="1505"/>
    </location>
</feature>
<feature type="domain" description="bHLH" evidence="5">
    <location>
        <begin position="27"/>
        <end position="84"/>
    </location>
</feature>
<feature type="domain" description="PAS" evidence="4">
    <location>
        <begin position="113"/>
        <end position="183"/>
    </location>
</feature>
<feature type="region of interest" description="Disordered" evidence="6">
    <location>
        <begin position="1"/>
        <end position="41"/>
    </location>
</feature>
<feature type="region of interest" description="Disordered" evidence="6">
    <location>
        <begin position="392"/>
        <end position="515"/>
    </location>
</feature>
<feature type="region of interest" description="Disordered" evidence="6">
    <location>
        <begin position="542"/>
        <end position="562"/>
    </location>
</feature>
<feature type="region of interest" description="Disordered" evidence="6">
    <location>
        <begin position="578"/>
        <end position="676"/>
    </location>
</feature>
<feature type="region of interest" description="Disordered" evidence="6">
    <location>
        <begin position="835"/>
        <end position="871"/>
    </location>
</feature>
<feature type="region of interest" description="Disordered" evidence="6">
    <location>
        <begin position="939"/>
        <end position="962"/>
    </location>
</feature>
<feature type="region of interest" description="Disordered" evidence="6">
    <location>
        <begin position="1246"/>
        <end position="1265"/>
    </location>
</feature>
<feature type="region of interest" description="Disordered" evidence="6">
    <location>
        <begin position="1277"/>
        <end position="1334"/>
    </location>
</feature>
<feature type="region of interest" description="Disordered" evidence="6">
    <location>
        <begin position="1372"/>
        <end position="1436"/>
    </location>
</feature>
<feature type="region of interest" description="Disordered" evidence="6">
    <location>
        <begin position="1475"/>
        <end position="1505"/>
    </location>
</feature>
<feature type="short sequence motif" description="LXXLL motif 1" evidence="3">
    <location>
        <begin position="630"/>
        <end position="634"/>
    </location>
</feature>
<feature type="short sequence motif" description="LXXLL motif 2" evidence="3">
    <location>
        <begin position="686"/>
        <end position="690"/>
    </location>
</feature>
<feature type="short sequence motif" description="LXXLL motif 3" evidence="3">
    <location>
        <begin position="742"/>
        <end position="746"/>
    </location>
</feature>
<feature type="short sequence motif" description="LLXXLXXXL motif" evidence="3">
    <location>
        <begin position="1069"/>
        <end position="1077"/>
    </location>
</feature>
<feature type="compositionally biased region" description="Polar residues" evidence="6">
    <location>
        <begin position="1"/>
        <end position="11"/>
    </location>
</feature>
<feature type="compositionally biased region" description="Basic and acidic residues" evidence="6">
    <location>
        <begin position="12"/>
        <end position="23"/>
    </location>
</feature>
<feature type="compositionally biased region" description="Polar residues" evidence="6">
    <location>
        <begin position="396"/>
        <end position="424"/>
    </location>
</feature>
<feature type="compositionally biased region" description="Polar residues" evidence="6">
    <location>
        <begin position="444"/>
        <end position="457"/>
    </location>
</feature>
<feature type="compositionally biased region" description="Polar residues" evidence="6">
    <location>
        <begin position="580"/>
        <end position="590"/>
    </location>
</feature>
<feature type="compositionally biased region" description="Low complexity" evidence="6">
    <location>
        <begin position="629"/>
        <end position="638"/>
    </location>
</feature>
<feature type="compositionally biased region" description="Gly residues" evidence="6">
    <location>
        <begin position="652"/>
        <end position="673"/>
    </location>
</feature>
<feature type="compositionally biased region" description="Polar residues" evidence="6">
    <location>
        <begin position="835"/>
        <end position="857"/>
    </location>
</feature>
<feature type="compositionally biased region" description="Low complexity" evidence="6">
    <location>
        <begin position="947"/>
        <end position="957"/>
    </location>
</feature>
<feature type="compositionally biased region" description="Low complexity" evidence="6">
    <location>
        <begin position="1248"/>
        <end position="1262"/>
    </location>
</feature>
<feature type="compositionally biased region" description="Low complexity" evidence="6">
    <location>
        <begin position="1277"/>
        <end position="1291"/>
    </location>
</feature>
<feature type="compositionally biased region" description="Polar residues" evidence="6">
    <location>
        <begin position="1372"/>
        <end position="1384"/>
    </location>
</feature>
<feature type="compositionally biased region" description="Polar residues" evidence="6">
    <location>
        <begin position="1408"/>
        <end position="1436"/>
    </location>
</feature>
<feature type="compositionally biased region" description="Low complexity" evidence="6">
    <location>
        <begin position="1475"/>
        <end position="1499"/>
    </location>
</feature>
<feature type="modified residue" description="Phosphoserine" evidence="11">
    <location>
        <position position="695"/>
    </location>
</feature>
<feature type="splice variant" id="VSP_052992" description="In isoform E20b." evidence="14">
    <location>
        <begin position="1309"/>
        <end position="1378"/>
    </location>
</feature>
<feature type="sequence conflict" description="In Ref. 2; AAI63724." evidence="15" ref="2">
    <original>S</original>
    <variation>N</variation>
    <location>
        <position position="44"/>
    </location>
</feature>
<feature type="sequence conflict" description="In Ref. 2; AAI63724." evidence="15" ref="2">
    <original>S</original>
    <variation>G</variation>
    <location>
        <position position="574"/>
    </location>
</feature>
<feature type="sequence conflict" description="In Ref. 2; AAI63724." evidence="15" ref="2">
    <original>P</original>
    <variation>T</variation>
    <location>
        <position position="576"/>
    </location>
</feature>
<feature type="sequence conflict" description="In Ref. 2; AAI63724." evidence="15" ref="2">
    <original>T</original>
    <variation>N</variation>
    <location>
        <position position="589"/>
    </location>
</feature>
<feature type="sequence conflict" description="In Ref. 2; AAI63724." evidence="15" ref="2">
    <original>G</original>
    <variation>R</variation>
    <location>
        <position position="978"/>
    </location>
</feature>
<feature type="sequence conflict" description="In Ref. 2; AAI63724." evidence="15" ref="2">
    <original>L</original>
    <variation>P</variation>
    <location>
        <position position="1298"/>
    </location>
</feature>
<protein>
    <recommendedName>
        <fullName evidence="12">Nuclear receptor coactivator 2</fullName>
        <shortName evidence="1">NCoA-2</shortName>
        <shortName evidence="12">NCoA2</shortName>
    </recommendedName>
    <alternativeName>
        <fullName evidence="2">Glucocorticoid receptor-interacting protein 1</fullName>
    </alternativeName>
    <alternativeName>
        <fullName evidence="13">Steroid receptor coactivator 2</fullName>
    </alternativeName>
    <alternativeName>
        <fullName evidence="16">Transcriptional intermediary factor 2</fullName>
    </alternativeName>
</protein>
<keyword id="KW-0010">Activator</keyword>
<keyword id="KW-0025">Alternative splicing</keyword>
<keyword id="KW-0090">Biological rhythms</keyword>
<keyword id="KW-0217">Developmental protein</keyword>
<keyword id="KW-0539">Nucleus</keyword>
<keyword id="KW-0597">Phosphoprotein</keyword>
<keyword id="KW-0675">Receptor</keyword>
<keyword id="KW-1185">Reference proteome</keyword>
<keyword id="KW-0677">Repeat</keyword>
<keyword id="KW-0804">Transcription</keyword>
<keyword id="KW-0805">Transcription regulation</keyword>
<proteinExistence type="evidence at protein level"/>
<dbReference type="EMBL" id="AF323989">
    <property type="protein sequence ID" value="AAK11608.1"/>
    <property type="molecule type" value="mRNA"/>
</dbReference>
<dbReference type="EMBL" id="AY210802">
    <property type="protein sequence ID" value="AAP69780.1"/>
    <property type="molecule type" value="Genomic_DNA"/>
</dbReference>
<dbReference type="EMBL" id="BC163724">
    <property type="protein sequence ID" value="AAI63724.1"/>
    <property type="molecule type" value="mRNA"/>
</dbReference>
<dbReference type="RefSeq" id="NP_571852.1">
    <molecule id="Q98TW1-1"/>
    <property type="nucleotide sequence ID" value="NM_131777.1"/>
</dbReference>
<dbReference type="FunCoup" id="Q98TW1">
    <property type="interactions" value="1822"/>
</dbReference>
<dbReference type="STRING" id="7955.ENSDARP00000107210"/>
<dbReference type="iPTMnet" id="Q98TW1"/>
<dbReference type="PaxDb" id="7955-ENSDARP00000107210"/>
<dbReference type="GeneID" id="81884"/>
<dbReference type="KEGG" id="dre:81884"/>
<dbReference type="AGR" id="ZFIN:ZDB-GENE-010406-3"/>
<dbReference type="CTD" id="10499"/>
<dbReference type="ZFIN" id="ZDB-GENE-010406-3">
    <property type="gene designation" value="ncoa2"/>
</dbReference>
<dbReference type="eggNOG" id="KOG3561">
    <property type="taxonomic scope" value="Eukaryota"/>
</dbReference>
<dbReference type="InParanoid" id="Q98TW1"/>
<dbReference type="OrthoDB" id="10035882at2759"/>
<dbReference type="PhylomeDB" id="Q98TW1"/>
<dbReference type="Reactome" id="R-DRE-159418">
    <property type="pathway name" value="Recycling of bile acids and salts"/>
</dbReference>
<dbReference type="Reactome" id="R-DRE-3214847">
    <property type="pathway name" value="HATs acetylate histones"/>
</dbReference>
<dbReference type="Reactome" id="R-DRE-400206">
    <property type="pathway name" value="Regulation of lipid metabolism by PPARalpha"/>
</dbReference>
<dbReference type="Reactome" id="R-DRE-5625886">
    <property type="pathway name" value="Activated PKN1 stimulates transcription of AR (androgen receptor) regulated genes KLK2 and KLK3"/>
</dbReference>
<dbReference type="Reactome" id="R-DRE-9707564">
    <property type="pathway name" value="Cytoprotection by HMOX1"/>
</dbReference>
<dbReference type="PRO" id="PR:Q98TW1"/>
<dbReference type="Proteomes" id="UP000000437">
    <property type="component" value="Alternate scaffold 24"/>
</dbReference>
<dbReference type="Proteomes" id="UP000000437">
    <property type="component" value="Chromosome 24"/>
</dbReference>
<dbReference type="GO" id="GO:0005634">
    <property type="term" value="C:nucleus"/>
    <property type="evidence" value="ECO:0000250"/>
    <property type="project" value="UniProtKB"/>
</dbReference>
<dbReference type="GO" id="GO:0016922">
    <property type="term" value="F:nuclear receptor binding"/>
    <property type="evidence" value="ECO:0000318"/>
    <property type="project" value="GO_Central"/>
</dbReference>
<dbReference type="GO" id="GO:0046966">
    <property type="term" value="F:nuclear thyroid hormone receptor binding"/>
    <property type="evidence" value="ECO:0000353"/>
    <property type="project" value="UniProtKB"/>
</dbReference>
<dbReference type="GO" id="GO:0046983">
    <property type="term" value="F:protein dimerization activity"/>
    <property type="evidence" value="ECO:0007669"/>
    <property type="project" value="InterPro"/>
</dbReference>
<dbReference type="GO" id="GO:0003713">
    <property type="term" value="F:transcription coactivator activity"/>
    <property type="evidence" value="ECO:0000250"/>
    <property type="project" value="UniProtKB"/>
</dbReference>
<dbReference type="GO" id="GO:0032870">
    <property type="term" value="P:cellular response to hormone stimulus"/>
    <property type="evidence" value="ECO:0000318"/>
    <property type="project" value="GO_Central"/>
</dbReference>
<dbReference type="GO" id="GO:0043009">
    <property type="term" value="P:chordate embryonic development"/>
    <property type="evidence" value="ECO:0000315"/>
    <property type="project" value="ZFIN"/>
</dbReference>
<dbReference type="GO" id="GO:0030851">
    <property type="term" value="P:granulocyte differentiation"/>
    <property type="evidence" value="ECO:0000315"/>
    <property type="project" value="UniProtKB"/>
</dbReference>
<dbReference type="GO" id="GO:0030099">
    <property type="term" value="P:myeloid cell differentiation"/>
    <property type="evidence" value="ECO:0000315"/>
    <property type="project" value="UniProtKB"/>
</dbReference>
<dbReference type="GO" id="GO:0045944">
    <property type="term" value="P:positive regulation of transcription by RNA polymerase II"/>
    <property type="evidence" value="ECO:0000318"/>
    <property type="project" value="GO_Central"/>
</dbReference>
<dbReference type="GO" id="GO:0060215">
    <property type="term" value="P:primitive hemopoiesis"/>
    <property type="evidence" value="ECO:0000315"/>
    <property type="project" value="UniProtKB"/>
</dbReference>
<dbReference type="GO" id="GO:0006355">
    <property type="term" value="P:regulation of DNA-templated transcription"/>
    <property type="evidence" value="ECO:0000250"/>
    <property type="project" value="UniProtKB"/>
</dbReference>
<dbReference type="GO" id="GO:0019216">
    <property type="term" value="P:regulation of lipid metabolic process"/>
    <property type="evidence" value="ECO:0000250"/>
    <property type="project" value="UniProtKB"/>
</dbReference>
<dbReference type="GO" id="GO:0048511">
    <property type="term" value="P:rhythmic process"/>
    <property type="evidence" value="ECO:0007669"/>
    <property type="project" value="UniProtKB-KW"/>
</dbReference>
<dbReference type="CDD" id="cd18950">
    <property type="entry name" value="bHLH-PAS_NCoA2_SRC2"/>
    <property type="match status" value="1"/>
</dbReference>
<dbReference type="CDD" id="cd00130">
    <property type="entry name" value="PAS"/>
    <property type="match status" value="1"/>
</dbReference>
<dbReference type="FunFam" id="3.30.450.20:FF:000007">
    <property type="entry name" value="Nuclear receptor coactivator"/>
    <property type="match status" value="1"/>
</dbReference>
<dbReference type="FunFam" id="3.30.450.20:FF:000008">
    <property type="entry name" value="Nuclear receptor coactivator"/>
    <property type="match status" value="1"/>
</dbReference>
<dbReference type="FunFam" id="4.10.280.10:FF:000008">
    <property type="entry name" value="Nuclear receptor coactivator"/>
    <property type="match status" value="1"/>
</dbReference>
<dbReference type="Gene3D" id="6.10.140.410">
    <property type="match status" value="1"/>
</dbReference>
<dbReference type="Gene3D" id="4.10.280.10">
    <property type="entry name" value="Helix-loop-helix DNA-binding domain"/>
    <property type="match status" value="1"/>
</dbReference>
<dbReference type="Gene3D" id="3.30.450.20">
    <property type="entry name" value="PAS domain"/>
    <property type="match status" value="2"/>
</dbReference>
<dbReference type="InterPro" id="IPR011598">
    <property type="entry name" value="bHLH_dom"/>
</dbReference>
<dbReference type="InterPro" id="IPR056193">
    <property type="entry name" value="bHLH_NCOA1-3"/>
</dbReference>
<dbReference type="InterPro" id="IPR036638">
    <property type="entry name" value="HLH_DNA-bd_sf"/>
</dbReference>
<dbReference type="InterPro" id="IPR010011">
    <property type="entry name" value="NCO_DUF1518"/>
</dbReference>
<dbReference type="InterPro" id="IPR032565">
    <property type="entry name" value="NCOA2/3_DUF4927"/>
</dbReference>
<dbReference type="InterPro" id="IPR028822">
    <property type="entry name" value="NCOA2_bHLH"/>
</dbReference>
<dbReference type="InterPro" id="IPR009110">
    <property type="entry name" value="Nuc_rcpt_coact"/>
</dbReference>
<dbReference type="InterPro" id="IPR014920">
    <property type="entry name" value="Nuc_rcpt_coact_Ncoa-typ"/>
</dbReference>
<dbReference type="InterPro" id="IPR037077">
    <property type="entry name" value="Nuc_rcpt_coact_Ncoa_int_sf"/>
</dbReference>
<dbReference type="InterPro" id="IPR017426">
    <property type="entry name" value="Nuclear_rcpt_coactivator"/>
</dbReference>
<dbReference type="InterPro" id="IPR000014">
    <property type="entry name" value="PAS"/>
</dbReference>
<dbReference type="InterPro" id="IPR035965">
    <property type="entry name" value="PAS-like_dom_sf"/>
</dbReference>
<dbReference type="InterPro" id="IPR013767">
    <property type="entry name" value="PAS_fold"/>
</dbReference>
<dbReference type="InterPro" id="IPR014935">
    <property type="entry name" value="SRC/p160_LXXLL"/>
</dbReference>
<dbReference type="PANTHER" id="PTHR10684">
    <property type="entry name" value="NUCLEAR RECEPTOR COACTIVATOR"/>
    <property type="match status" value="1"/>
</dbReference>
<dbReference type="PANTHER" id="PTHR10684:SF2">
    <property type="entry name" value="NUCLEAR RECEPTOR COACTIVATOR 2"/>
    <property type="match status" value="1"/>
</dbReference>
<dbReference type="Pfam" id="PF23172">
    <property type="entry name" value="bHLH_NCOA"/>
    <property type="match status" value="1"/>
</dbReference>
<dbReference type="Pfam" id="PF07469">
    <property type="entry name" value="DUF1518"/>
    <property type="match status" value="2"/>
</dbReference>
<dbReference type="Pfam" id="PF16279">
    <property type="entry name" value="DUF4927"/>
    <property type="match status" value="1"/>
</dbReference>
<dbReference type="Pfam" id="PF16665">
    <property type="entry name" value="NCOA_u2"/>
    <property type="match status" value="1"/>
</dbReference>
<dbReference type="Pfam" id="PF08815">
    <property type="entry name" value="Nuc_rec_co-act"/>
    <property type="match status" value="1"/>
</dbReference>
<dbReference type="Pfam" id="PF00989">
    <property type="entry name" value="PAS"/>
    <property type="match status" value="1"/>
</dbReference>
<dbReference type="Pfam" id="PF14598">
    <property type="entry name" value="PAS_11"/>
    <property type="match status" value="1"/>
</dbReference>
<dbReference type="Pfam" id="PF08832">
    <property type="entry name" value="SRC-1"/>
    <property type="match status" value="1"/>
</dbReference>
<dbReference type="PIRSF" id="PIRSF038181">
    <property type="entry name" value="Nuclear_receptor_coactivator"/>
    <property type="match status" value="1"/>
</dbReference>
<dbReference type="SMART" id="SM01151">
    <property type="entry name" value="DUF1518"/>
    <property type="match status" value="2"/>
</dbReference>
<dbReference type="SMART" id="SM00353">
    <property type="entry name" value="HLH"/>
    <property type="match status" value="1"/>
</dbReference>
<dbReference type="SMART" id="SM00091">
    <property type="entry name" value="PAS"/>
    <property type="match status" value="1"/>
</dbReference>
<dbReference type="SUPFAM" id="SSF47459">
    <property type="entry name" value="HLH, helix-loop-helix DNA-binding domain"/>
    <property type="match status" value="1"/>
</dbReference>
<dbReference type="SUPFAM" id="SSF69125">
    <property type="entry name" value="Nuclear receptor coactivator interlocking domain"/>
    <property type="match status" value="1"/>
</dbReference>
<dbReference type="SUPFAM" id="SSF55785">
    <property type="entry name" value="PYP-like sensor domain (PAS domain)"/>
    <property type="match status" value="2"/>
</dbReference>
<dbReference type="PROSITE" id="PS50888">
    <property type="entry name" value="BHLH"/>
    <property type="match status" value="1"/>
</dbReference>
<dbReference type="PROSITE" id="PS50112">
    <property type="entry name" value="PAS"/>
    <property type="match status" value="1"/>
</dbReference>
<reference evidence="15 17" key="1">
    <citation type="journal article" date="2005" name="Zebrafish">
        <title>Cloning, genomic organization, and expression analysis of zebrafish nuclear receptor coactivator, TIF2.</title>
        <authorList>
            <person name="Tan J.-H."/>
            <person name="Quek S.-I."/>
            <person name="Chan W.-K."/>
        </authorList>
    </citation>
    <scope>NUCLEOTIDE SEQUENCE [GENOMIC DNA / MRNA] (ISOFORM E20A)</scope>
    <scope>PARTIAL NUCLEOTIDE SEQUENCE [MRNA] (ISOFORM E20B)</scope>
    <scope>INTERACTION WITH THRB</scope>
    <scope>TISSUE SPECIFICITY</scope>
    <scope>ALTERNATIVE SPLICING</scope>
    <source>
        <strain evidence="9">AB</strain>
    </source>
</reference>
<reference evidence="15 16" key="2">
    <citation type="submission" date="2008-04" db="EMBL/GenBank/DDBJ databases">
        <authorList>
            <consortium name="NIH - Zebrafish Gene Collection (ZGC) project"/>
        </authorList>
    </citation>
    <scope>NUCLEOTIDE SEQUENCE [LARGE SCALE MRNA] (ISOFORM E20A)</scope>
</reference>
<reference evidence="15" key="3">
    <citation type="journal article" date="2007" name="PLoS Genet.">
        <title>Unexpected novel relational links uncovered by extensive developmental profiling of nuclear receptor expression.</title>
        <authorList>
            <person name="Bertrand S."/>
            <person name="Thisse B."/>
            <person name="Tavares R."/>
            <person name="Sachs L."/>
            <person name="Chaumot A."/>
            <person name="Bardet P.-L."/>
            <person name="Escriva H."/>
            <person name="Duffraisse M."/>
            <person name="Marchand O."/>
            <person name="Safi R."/>
            <person name="Thisse C."/>
            <person name="Laudet V."/>
        </authorList>
    </citation>
    <scope>TISSUE SPECIFICITY</scope>
</reference>
<reference evidence="15" key="4">
    <citation type="journal article" date="2008" name="Exp. Hematol.">
        <title>A role for the transcription intermediary factor 2 in zebrafish myelopoiesis.</title>
        <authorList>
            <person name="Zhuravleva J."/>
            <person name="Solary E."/>
            <person name="Chluba J."/>
            <person name="Bastie J.-N."/>
            <person name="Delva L."/>
        </authorList>
    </citation>
    <scope>FUNCTION</scope>
    <scope>TISSUE SPECIFICITY</scope>
</reference>
<reference evidence="15" key="5">
    <citation type="journal article" date="2008" name="Gen. Comp. Endocrinol.">
        <title>An F-domain introduced by alternative splicing regulates activity of the zebrafish thyroid hormone receptor alpha.</title>
        <authorList>
            <person name="Takayama S."/>
            <person name="Hostick U."/>
            <person name="Haendel M."/>
            <person name="Eisen J."/>
            <person name="Darimont B."/>
        </authorList>
    </citation>
    <scope>INTERACTION WITH THRAA</scope>
</reference>
<reference evidence="15" key="6">
    <citation type="journal article" date="2008" name="J. Proteome Res.">
        <title>Online automated in vivo zebrafish phosphoproteomics: from large-scale analysis down to a single embryo.</title>
        <authorList>
            <person name="Lemeer S."/>
            <person name="Pinkse M.W.H."/>
            <person name="Mohammed S."/>
            <person name="van Breukelen B."/>
            <person name="den Hertog J."/>
            <person name="Slijper M."/>
            <person name="Heck A.J.R."/>
        </authorList>
    </citation>
    <scope>PHOSPHORYLATION [LARGE SCALE ANALYSIS] AT SER-695</scope>
    <scope>IDENTIFICATION BY MASS SPECTROMETRY</scope>
    <source>
        <tissue evidence="11">Embryo</tissue>
    </source>
</reference>
<sequence>MSAVGENSSDPARSEAQKRKEGPSDLLGPSPKRSTEKRNREHESKYIEELAELIFANFNDIDNFNVKPDKCAILKETVKQIRQIKEQEKAAAANEDEVQKADVSSTGQSVIDKDALGPMMLEALDGFFFVVNMEGNIVFVSENVTQYLRYNQEELMNTSVYSILHVGDHAEFIKNLLPKSHVNGVPWSSENPRRNSHTFNCRMLVNPHSEAEETQDHEAQQKYETMQCFAVSEPKSIKEEGEDFQSCLICVARRVPMKERPMLPTQESFTTRQDLQGKITSLDTSLLRASMKPGWEDLVRRCIQRFHLQNDGDISFAKRHQQEVIRHGQAFSPIYRFSLSDGTIVSAHTKSKLVRSSSTNEPQLYMSLHILQREQPVCGMASDLGNAQTMGKPMNPMSSPNTAGSSCTPQGQDATISSNTSTFPSPGAQKEPGAMHRFGCPGTMSHSATMQAATPQGSGYPLKLSSPSQGSPGMLSPRHRASPGVAGSPRLPPPQFSPAGSLHSPASMCTSSTGGNGGAGANHGYTSSSLNALQALSECHGVSHGQSLGSPDRKLGSPAAHSVAVSHHLINKMSVPESFGEQNQSEQGTPGQDEGIDLPRDEKGNLGQFGNLDGSDPQSRLRDNKSHTKLLQLLTTKTEPIESTSPPPMAGGEPGCKDGGAGNGGMGSQGGNGSHATSLKEKHKILHRLLQNSSSPVDLAKLTAEATGKELCQDSAGGTAGVPELAIKQEPVSPKKKDNALLRYLLDKDDNVLKGKGIKMEPGEIKEEGGKMTGIKTEKTDGGYDRVEPSSELDDILDDLQNSQPGLFTDSRPVSLPSAVDKQSIINDILQMTGESGANMSPQQQRALQTAVSQQNFPAPRPGQPGRAPPVRSVSLDMNMPPKGAQGQYPMMRNNNPYSIMQQQGMMGNHAVMPNQPNMVNAGVMGNNGPRVGMQQDGWGAQGTVGSAASPATAAPAGQHSLPQGALHSRMVPNPATGMPMRPNSQPGPRPMLQPQMMANAQSNMDMGMAGHQFPQQQAPPNQTAPWPDSVMPIEPVPFGNQSSSMYGGSQEDVLCPPASEGPADEGALLSQLYSALKDFDGLEEIDRALGIPALVGQAQPVEQDQFPGQDPSMMMDQKPPMYGQQQYASSPANMQQAGYTPMQDATFHGLQGQMGQRPGYPMLRMQARPGLRPGGVVPNQPNTLRLQLQHRLQAQQNRQPMMNQMGGVSNMNLPLRPNVPNQGTINAQMLAQRQRELLSNHLRQRQLDQQRQQQQQQQQQRSLAMRAQGLTMPPNMAAAAAGMPGAMSNPRIPQANLQQFPYPPNYGTGLASPPPSTSPFSPGSPNLPAPQLLSHSAMHGSQMSLANQGMLGSLSGQFGAVMSPQMQHSAFQFPSSGMSQQSDGGFGGAATPQSPLMSPRMGHAQSPMMQQAQGNSSFQSSPDMNGWPQGNINTNSMFTQQSPPQFSQQANNNMYNGNGMNLNVSMAANSSNMGQMGNQMSMSSMNSGPGSGMANMGPEQQKYC</sequence>
<gene>
    <name evidence="18" type="primary">ncoa2</name>
    <name evidence="13" type="synonym">grip1</name>
    <name evidence="13" type="synonym">src2</name>
    <name evidence="16 18" type="synonym">tif2</name>
</gene>
<organism>
    <name type="scientific">Danio rerio</name>
    <name type="common">Zebrafish</name>
    <name type="synonym">Brachydanio rerio</name>
    <dbReference type="NCBI Taxonomy" id="7955"/>
    <lineage>
        <taxon>Eukaryota</taxon>
        <taxon>Metazoa</taxon>
        <taxon>Chordata</taxon>
        <taxon>Craniata</taxon>
        <taxon>Vertebrata</taxon>
        <taxon>Euteleostomi</taxon>
        <taxon>Actinopterygii</taxon>
        <taxon>Neopterygii</taxon>
        <taxon>Teleostei</taxon>
        <taxon>Ostariophysi</taxon>
        <taxon>Cypriniformes</taxon>
        <taxon>Danionidae</taxon>
        <taxon>Danioninae</taxon>
        <taxon>Danio</taxon>
    </lineage>
</organism>
<name>NCOA2_DANRE</name>